<accession>B3WAK4</accession>
<gene>
    <name evidence="1" type="primary">rpsH</name>
    <name type="ordered locus">LCABL_26570</name>
</gene>
<dbReference type="EMBL" id="FM177140">
    <property type="protein sequence ID" value="CAQ67723.1"/>
    <property type="molecule type" value="Genomic_DNA"/>
</dbReference>
<dbReference type="SMR" id="B3WAK4"/>
<dbReference type="KEGG" id="lcb:LCABL_26570"/>
<dbReference type="HOGENOM" id="CLU_098428_0_2_9"/>
<dbReference type="GO" id="GO:1990904">
    <property type="term" value="C:ribonucleoprotein complex"/>
    <property type="evidence" value="ECO:0007669"/>
    <property type="project" value="UniProtKB-KW"/>
</dbReference>
<dbReference type="GO" id="GO:0005840">
    <property type="term" value="C:ribosome"/>
    <property type="evidence" value="ECO:0007669"/>
    <property type="project" value="UniProtKB-KW"/>
</dbReference>
<dbReference type="GO" id="GO:0019843">
    <property type="term" value="F:rRNA binding"/>
    <property type="evidence" value="ECO:0007669"/>
    <property type="project" value="UniProtKB-UniRule"/>
</dbReference>
<dbReference type="GO" id="GO:0003735">
    <property type="term" value="F:structural constituent of ribosome"/>
    <property type="evidence" value="ECO:0007669"/>
    <property type="project" value="InterPro"/>
</dbReference>
<dbReference type="GO" id="GO:0006412">
    <property type="term" value="P:translation"/>
    <property type="evidence" value="ECO:0007669"/>
    <property type="project" value="UniProtKB-UniRule"/>
</dbReference>
<dbReference type="FunFam" id="3.30.1370.30:FF:000002">
    <property type="entry name" value="30S ribosomal protein S8"/>
    <property type="match status" value="1"/>
</dbReference>
<dbReference type="FunFam" id="3.30.1490.10:FF:000001">
    <property type="entry name" value="30S ribosomal protein S8"/>
    <property type="match status" value="1"/>
</dbReference>
<dbReference type="Gene3D" id="3.30.1370.30">
    <property type="match status" value="1"/>
</dbReference>
<dbReference type="Gene3D" id="3.30.1490.10">
    <property type="match status" value="1"/>
</dbReference>
<dbReference type="HAMAP" id="MF_01302_B">
    <property type="entry name" value="Ribosomal_uS8_B"/>
    <property type="match status" value="1"/>
</dbReference>
<dbReference type="InterPro" id="IPR000630">
    <property type="entry name" value="Ribosomal_uS8"/>
</dbReference>
<dbReference type="InterPro" id="IPR047863">
    <property type="entry name" value="Ribosomal_uS8_CS"/>
</dbReference>
<dbReference type="InterPro" id="IPR035987">
    <property type="entry name" value="Ribosomal_uS8_sf"/>
</dbReference>
<dbReference type="NCBIfam" id="NF001109">
    <property type="entry name" value="PRK00136.1"/>
    <property type="match status" value="1"/>
</dbReference>
<dbReference type="PANTHER" id="PTHR11758">
    <property type="entry name" value="40S RIBOSOMAL PROTEIN S15A"/>
    <property type="match status" value="1"/>
</dbReference>
<dbReference type="Pfam" id="PF00410">
    <property type="entry name" value="Ribosomal_S8"/>
    <property type="match status" value="1"/>
</dbReference>
<dbReference type="SUPFAM" id="SSF56047">
    <property type="entry name" value="Ribosomal protein S8"/>
    <property type="match status" value="1"/>
</dbReference>
<dbReference type="PROSITE" id="PS00053">
    <property type="entry name" value="RIBOSOMAL_S8"/>
    <property type="match status" value="1"/>
</dbReference>
<evidence type="ECO:0000255" key="1">
    <source>
        <dbReference type="HAMAP-Rule" id="MF_01302"/>
    </source>
</evidence>
<evidence type="ECO:0000305" key="2"/>
<name>RS8_LACCB</name>
<proteinExistence type="inferred from homology"/>
<reference key="1">
    <citation type="submission" date="2008-06" db="EMBL/GenBank/DDBJ databases">
        <title>Lactobacillus casei BL23 complete genome sequence.</title>
        <authorList>
            <person name="Maze A."/>
            <person name="Boel G."/>
            <person name="Bourand A."/>
            <person name="Loux V."/>
            <person name="Gibrat J.F."/>
            <person name="Zuniga M."/>
            <person name="Hartke A."/>
            <person name="Deutscher J."/>
        </authorList>
    </citation>
    <scope>NUCLEOTIDE SEQUENCE [LARGE SCALE GENOMIC DNA]</scope>
    <source>
        <strain>BL23</strain>
    </source>
</reference>
<comment type="function">
    <text evidence="1">One of the primary rRNA binding proteins, it binds directly to 16S rRNA central domain where it helps coordinate assembly of the platform of the 30S subunit.</text>
</comment>
<comment type="subunit">
    <text evidence="1">Part of the 30S ribosomal subunit. Contacts proteins S5 and S12.</text>
</comment>
<comment type="similarity">
    <text evidence="1">Belongs to the universal ribosomal protein uS8 family.</text>
</comment>
<feature type="chain" id="PRO_1000140571" description="Small ribosomal subunit protein uS8">
    <location>
        <begin position="1"/>
        <end position="132"/>
    </location>
</feature>
<organism>
    <name type="scientific">Lacticaseibacillus casei (strain BL23)</name>
    <name type="common">Lactobacillus casei</name>
    <dbReference type="NCBI Taxonomy" id="543734"/>
    <lineage>
        <taxon>Bacteria</taxon>
        <taxon>Bacillati</taxon>
        <taxon>Bacillota</taxon>
        <taxon>Bacilli</taxon>
        <taxon>Lactobacillales</taxon>
        <taxon>Lactobacillaceae</taxon>
        <taxon>Lacticaseibacillus</taxon>
    </lineage>
</organism>
<sequence>MVLTDPIADYLTRIRNANMVRHESLVVPASKMKKDISEILKREGFIRDYEVIDDDKQGVIRIFLKYGKNNERVISGLKRISKPGLRSYVKSDAVPKVLNGLGIAIISTSEGVITDKEARAKNVGGEVLAYVW</sequence>
<keyword id="KW-0687">Ribonucleoprotein</keyword>
<keyword id="KW-0689">Ribosomal protein</keyword>
<keyword id="KW-0694">RNA-binding</keyword>
<keyword id="KW-0699">rRNA-binding</keyword>
<protein>
    <recommendedName>
        <fullName evidence="1">Small ribosomal subunit protein uS8</fullName>
    </recommendedName>
    <alternativeName>
        <fullName evidence="2">30S ribosomal protein S8</fullName>
    </alternativeName>
</protein>